<sequence length="254" mass="29386">MIIVISPAKSQNFEPIKTAYQFTQPIFKQQIIKLINTLKYYEVEEIEKLMKISPKLAEEVFAKHNSFNPNKYDNSNAKAAIFTFSGDVYKGLEADTLDNKTIEYAQNHLLMLSGLYGLVRPLDLIQAYRLEMGTNIKIDGKILHKYWQDKITTQLNEYFSQQQNKILINLASNEYSQAIDKKSLAVKWLDIDFKENKAGAYKTIGIHAKKARGLMTRYILENRIENVSDIKKFNVAGYQFNPDFSDENLLCFTR</sequence>
<evidence type="ECO:0000255" key="1">
    <source>
        <dbReference type="HAMAP-Rule" id="MF_00652"/>
    </source>
</evidence>
<proteinExistence type="inferred from homology"/>
<reference key="1">
    <citation type="journal article" date="2005" name="Nat. Genet.">
        <title>The complete genome sequence of Francisella tularensis, the causative agent of tularemia.</title>
        <authorList>
            <person name="Larsson P."/>
            <person name="Oyston P.C.F."/>
            <person name="Chain P."/>
            <person name="Chu M.C."/>
            <person name="Duffield M."/>
            <person name="Fuxelius H.-H."/>
            <person name="Garcia E."/>
            <person name="Haelltorp G."/>
            <person name="Johansson D."/>
            <person name="Isherwood K.E."/>
            <person name="Karp P.D."/>
            <person name="Larsson E."/>
            <person name="Liu Y."/>
            <person name="Michell S."/>
            <person name="Prior J."/>
            <person name="Prior R."/>
            <person name="Malfatti S."/>
            <person name="Sjoestedt A."/>
            <person name="Svensson K."/>
            <person name="Thompson N."/>
            <person name="Vergez L."/>
            <person name="Wagg J.K."/>
            <person name="Wren B.W."/>
            <person name="Lindler L.E."/>
            <person name="Andersson S.G.E."/>
            <person name="Forsman M."/>
            <person name="Titball R.W."/>
        </authorList>
    </citation>
    <scope>NUCLEOTIDE SEQUENCE [LARGE SCALE GENOMIC DNA]</scope>
    <source>
        <strain>SCHU S4 / Schu 4</strain>
    </source>
</reference>
<protein>
    <recommendedName>
        <fullName evidence="1">UPF0246 protein FTT_1693c</fullName>
    </recommendedName>
</protein>
<gene>
    <name type="ordered locus">FTT_1693c</name>
</gene>
<organism>
    <name type="scientific">Francisella tularensis subsp. tularensis (strain SCHU S4 / Schu 4)</name>
    <dbReference type="NCBI Taxonomy" id="177416"/>
    <lineage>
        <taxon>Bacteria</taxon>
        <taxon>Pseudomonadati</taxon>
        <taxon>Pseudomonadota</taxon>
        <taxon>Gammaproteobacteria</taxon>
        <taxon>Thiotrichales</taxon>
        <taxon>Francisellaceae</taxon>
        <taxon>Francisella</taxon>
    </lineage>
</organism>
<name>Y1693_FRATT</name>
<dbReference type="EMBL" id="AJ749949">
    <property type="protein sequence ID" value="CAG46326.1"/>
    <property type="molecule type" value="Genomic_DNA"/>
</dbReference>
<dbReference type="RefSeq" id="WP_003029897.1">
    <property type="nucleotide sequence ID" value="NC_006570.2"/>
</dbReference>
<dbReference type="RefSeq" id="YP_170598.1">
    <property type="nucleotide sequence ID" value="NC_006570.2"/>
</dbReference>
<dbReference type="SMR" id="Q5NEE4"/>
<dbReference type="DNASU" id="3191497"/>
<dbReference type="EnsemblBacteria" id="CAG46326">
    <property type="protein sequence ID" value="CAG46326"/>
    <property type="gene ID" value="FTT_1693c"/>
</dbReference>
<dbReference type="KEGG" id="ftu:FTT_1693c"/>
<dbReference type="eggNOG" id="COG3022">
    <property type="taxonomic scope" value="Bacteria"/>
</dbReference>
<dbReference type="OrthoDB" id="9777133at2"/>
<dbReference type="Proteomes" id="UP000001174">
    <property type="component" value="Chromosome"/>
</dbReference>
<dbReference type="GO" id="GO:0005829">
    <property type="term" value="C:cytosol"/>
    <property type="evidence" value="ECO:0007669"/>
    <property type="project" value="TreeGrafter"/>
</dbReference>
<dbReference type="GO" id="GO:0033194">
    <property type="term" value="P:response to hydroperoxide"/>
    <property type="evidence" value="ECO:0007669"/>
    <property type="project" value="TreeGrafter"/>
</dbReference>
<dbReference type="HAMAP" id="MF_00652">
    <property type="entry name" value="UPF0246"/>
    <property type="match status" value="1"/>
</dbReference>
<dbReference type="InterPro" id="IPR005583">
    <property type="entry name" value="YaaA"/>
</dbReference>
<dbReference type="NCBIfam" id="NF002542">
    <property type="entry name" value="PRK02101.1-3"/>
    <property type="match status" value="1"/>
</dbReference>
<dbReference type="PANTHER" id="PTHR30283:SF4">
    <property type="entry name" value="PEROXIDE STRESS RESISTANCE PROTEIN YAAA"/>
    <property type="match status" value="1"/>
</dbReference>
<dbReference type="PANTHER" id="PTHR30283">
    <property type="entry name" value="PEROXIDE STRESS RESPONSE PROTEIN YAAA"/>
    <property type="match status" value="1"/>
</dbReference>
<dbReference type="Pfam" id="PF03883">
    <property type="entry name" value="H2O2_YaaD"/>
    <property type="match status" value="1"/>
</dbReference>
<comment type="similarity">
    <text evidence="1">Belongs to the UPF0246 family.</text>
</comment>
<accession>Q5NEE4</accession>
<feature type="chain" id="PRO_0000262019" description="UPF0246 protein FTT_1693c">
    <location>
        <begin position="1"/>
        <end position="254"/>
    </location>
</feature>
<keyword id="KW-1185">Reference proteome</keyword>